<evidence type="ECO:0000255" key="1">
    <source>
        <dbReference type="HAMAP-Rule" id="MF_01347"/>
    </source>
</evidence>
<feature type="chain" id="PRO_0000254219" description="ATP synthase subunit beta">
    <location>
        <begin position="1"/>
        <end position="464"/>
    </location>
</feature>
<feature type="binding site" evidence="1">
    <location>
        <begin position="154"/>
        <end position="161"/>
    </location>
    <ligand>
        <name>ATP</name>
        <dbReference type="ChEBI" id="CHEBI:30616"/>
    </ligand>
</feature>
<comment type="function">
    <text evidence="1">Produces ATP from ADP in the presence of a proton gradient across the membrane. The catalytic sites are hosted primarily by the beta subunits.</text>
</comment>
<comment type="catalytic activity">
    <reaction evidence="1">
        <text>ATP + H2O + 4 H(+)(in) = ADP + phosphate + 5 H(+)(out)</text>
        <dbReference type="Rhea" id="RHEA:57720"/>
        <dbReference type="ChEBI" id="CHEBI:15377"/>
        <dbReference type="ChEBI" id="CHEBI:15378"/>
        <dbReference type="ChEBI" id="CHEBI:30616"/>
        <dbReference type="ChEBI" id="CHEBI:43474"/>
        <dbReference type="ChEBI" id="CHEBI:456216"/>
        <dbReference type="EC" id="7.1.2.2"/>
    </reaction>
</comment>
<comment type="subunit">
    <text evidence="1">F-type ATPases have 2 components, CF(1) - the catalytic core - and CF(0) - the membrane proton channel. CF(1) has five subunits: alpha(3), beta(3), gamma(1), delta(1), epsilon(1). CF(0) has three main subunits: a(1), b(2) and c(9-12). The alpha and beta chains form an alternating ring which encloses part of the gamma chain. CF(1) is attached to CF(0) by a central stalk formed by the gamma and epsilon chains, while a peripheral stalk is formed by the delta and b chains.</text>
</comment>
<comment type="subcellular location">
    <subcellularLocation>
        <location evidence="1">Cell inner membrane</location>
        <topology evidence="1">Peripheral membrane protein</topology>
    </subcellularLocation>
</comment>
<comment type="similarity">
    <text evidence="1">Belongs to the ATPase alpha/beta chains family.</text>
</comment>
<proteinExistence type="inferred from homology"/>
<keyword id="KW-0066">ATP synthesis</keyword>
<keyword id="KW-0067">ATP-binding</keyword>
<keyword id="KW-0997">Cell inner membrane</keyword>
<keyword id="KW-1003">Cell membrane</keyword>
<keyword id="KW-0139">CF(1)</keyword>
<keyword id="KW-0375">Hydrogen ion transport</keyword>
<keyword id="KW-0406">Ion transport</keyword>
<keyword id="KW-0472">Membrane</keyword>
<keyword id="KW-0547">Nucleotide-binding</keyword>
<keyword id="KW-1185">Reference proteome</keyword>
<keyword id="KW-1278">Translocase</keyword>
<keyword id="KW-0813">Transport</keyword>
<dbReference type="EC" id="7.1.2.2" evidence="1"/>
<dbReference type="EMBL" id="BX248583">
    <property type="protein sequence ID" value="CAD83536.1"/>
    <property type="molecule type" value="Genomic_DNA"/>
</dbReference>
<dbReference type="SMR" id="Q7VQV6"/>
<dbReference type="STRING" id="203907.Bfl008"/>
<dbReference type="KEGG" id="bfl:Bfl008"/>
<dbReference type="eggNOG" id="COG0055">
    <property type="taxonomic scope" value="Bacteria"/>
</dbReference>
<dbReference type="HOGENOM" id="CLU_022398_0_2_6"/>
<dbReference type="OrthoDB" id="9801639at2"/>
<dbReference type="Proteomes" id="UP000002192">
    <property type="component" value="Chromosome"/>
</dbReference>
<dbReference type="GO" id="GO:0005886">
    <property type="term" value="C:plasma membrane"/>
    <property type="evidence" value="ECO:0007669"/>
    <property type="project" value="UniProtKB-SubCell"/>
</dbReference>
<dbReference type="GO" id="GO:0045259">
    <property type="term" value="C:proton-transporting ATP synthase complex"/>
    <property type="evidence" value="ECO:0007669"/>
    <property type="project" value="UniProtKB-KW"/>
</dbReference>
<dbReference type="GO" id="GO:0005524">
    <property type="term" value="F:ATP binding"/>
    <property type="evidence" value="ECO:0007669"/>
    <property type="project" value="UniProtKB-UniRule"/>
</dbReference>
<dbReference type="GO" id="GO:0016887">
    <property type="term" value="F:ATP hydrolysis activity"/>
    <property type="evidence" value="ECO:0007669"/>
    <property type="project" value="InterPro"/>
</dbReference>
<dbReference type="GO" id="GO:0046933">
    <property type="term" value="F:proton-transporting ATP synthase activity, rotational mechanism"/>
    <property type="evidence" value="ECO:0007669"/>
    <property type="project" value="UniProtKB-UniRule"/>
</dbReference>
<dbReference type="CDD" id="cd18110">
    <property type="entry name" value="ATP-synt_F1_beta_C"/>
    <property type="match status" value="1"/>
</dbReference>
<dbReference type="CDD" id="cd18115">
    <property type="entry name" value="ATP-synt_F1_beta_N"/>
    <property type="match status" value="1"/>
</dbReference>
<dbReference type="CDD" id="cd01133">
    <property type="entry name" value="F1-ATPase_beta_CD"/>
    <property type="match status" value="1"/>
</dbReference>
<dbReference type="FunFam" id="1.10.1140.10:FF:000001">
    <property type="entry name" value="ATP synthase subunit beta"/>
    <property type="match status" value="1"/>
</dbReference>
<dbReference type="FunFam" id="3.40.50.300:FF:000004">
    <property type="entry name" value="ATP synthase subunit beta"/>
    <property type="match status" value="1"/>
</dbReference>
<dbReference type="Gene3D" id="2.40.10.170">
    <property type="match status" value="1"/>
</dbReference>
<dbReference type="Gene3D" id="1.10.1140.10">
    <property type="entry name" value="Bovine Mitochondrial F1-atpase, Atp Synthase Beta Chain, Chain D, domain 3"/>
    <property type="match status" value="1"/>
</dbReference>
<dbReference type="Gene3D" id="3.40.50.300">
    <property type="entry name" value="P-loop containing nucleotide triphosphate hydrolases"/>
    <property type="match status" value="1"/>
</dbReference>
<dbReference type="HAMAP" id="MF_01347">
    <property type="entry name" value="ATP_synth_beta_bact"/>
    <property type="match status" value="1"/>
</dbReference>
<dbReference type="InterPro" id="IPR003593">
    <property type="entry name" value="AAA+_ATPase"/>
</dbReference>
<dbReference type="InterPro" id="IPR055190">
    <property type="entry name" value="ATP-synt_VA_C"/>
</dbReference>
<dbReference type="InterPro" id="IPR005722">
    <property type="entry name" value="ATP_synth_F1_bsu"/>
</dbReference>
<dbReference type="InterPro" id="IPR020003">
    <property type="entry name" value="ATPase_a/bsu_AS"/>
</dbReference>
<dbReference type="InterPro" id="IPR050053">
    <property type="entry name" value="ATPase_alpha/beta_chains"/>
</dbReference>
<dbReference type="InterPro" id="IPR004100">
    <property type="entry name" value="ATPase_F1/V1/A1_a/bsu_N"/>
</dbReference>
<dbReference type="InterPro" id="IPR036121">
    <property type="entry name" value="ATPase_F1/V1/A1_a/bsu_N_sf"/>
</dbReference>
<dbReference type="InterPro" id="IPR000194">
    <property type="entry name" value="ATPase_F1/V1/A1_a/bsu_nucl-bd"/>
</dbReference>
<dbReference type="InterPro" id="IPR024034">
    <property type="entry name" value="ATPase_F1/V1_b/a_C"/>
</dbReference>
<dbReference type="InterPro" id="IPR027417">
    <property type="entry name" value="P-loop_NTPase"/>
</dbReference>
<dbReference type="NCBIfam" id="TIGR01039">
    <property type="entry name" value="atpD"/>
    <property type="match status" value="1"/>
</dbReference>
<dbReference type="PANTHER" id="PTHR15184">
    <property type="entry name" value="ATP SYNTHASE"/>
    <property type="match status" value="1"/>
</dbReference>
<dbReference type="PANTHER" id="PTHR15184:SF71">
    <property type="entry name" value="ATP SYNTHASE SUBUNIT BETA, MITOCHONDRIAL"/>
    <property type="match status" value="1"/>
</dbReference>
<dbReference type="Pfam" id="PF00006">
    <property type="entry name" value="ATP-synt_ab"/>
    <property type="match status" value="1"/>
</dbReference>
<dbReference type="Pfam" id="PF02874">
    <property type="entry name" value="ATP-synt_ab_N"/>
    <property type="match status" value="1"/>
</dbReference>
<dbReference type="Pfam" id="PF22919">
    <property type="entry name" value="ATP-synt_VA_C"/>
    <property type="match status" value="1"/>
</dbReference>
<dbReference type="SMART" id="SM00382">
    <property type="entry name" value="AAA"/>
    <property type="match status" value="1"/>
</dbReference>
<dbReference type="SUPFAM" id="SSF47917">
    <property type="entry name" value="C-terminal domain of alpha and beta subunits of F1 ATP synthase"/>
    <property type="match status" value="1"/>
</dbReference>
<dbReference type="SUPFAM" id="SSF50615">
    <property type="entry name" value="N-terminal domain of alpha and beta subunits of F1 ATP synthase"/>
    <property type="match status" value="1"/>
</dbReference>
<dbReference type="SUPFAM" id="SSF52540">
    <property type="entry name" value="P-loop containing nucleoside triphosphate hydrolases"/>
    <property type="match status" value="1"/>
</dbReference>
<dbReference type="PROSITE" id="PS00152">
    <property type="entry name" value="ATPASE_ALPHA_BETA"/>
    <property type="match status" value="1"/>
</dbReference>
<accession>Q7VQV6</accession>
<reference key="1">
    <citation type="journal article" date="2003" name="Proc. Natl. Acad. Sci. U.S.A.">
        <title>The genome sequence of Blochmannia floridanus: comparative analysis of reduced genomes.</title>
        <authorList>
            <person name="Gil R."/>
            <person name="Silva F.J."/>
            <person name="Zientz E."/>
            <person name="Delmotte F."/>
            <person name="Gonzalez-Candelas F."/>
            <person name="Latorre A."/>
            <person name="Rausell C."/>
            <person name="Kamerbeek J."/>
            <person name="Gadau J."/>
            <person name="Hoelldobler B."/>
            <person name="van Ham R.C.H.J."/>
            <person name="Gross R."/>
            <person name="Moya A."/>
        </authorList>
    </citation>
    <scope>NUCLEOTIDE SEQUENCE [LARGE SCALE GENOMIC DNA]</scope>
</reference>
<organism>
    <name type="scientific">Blochmanniella floridana</name>
    <dbReference type="NCBI Taxonomy" id="203907"/>
    <lineage>
        <taxon>Bacteria</taxon>
        <taxon>Pseudomonadati</taxon>
        <taxon>Pseudomonadota</taxon>
        <taxon>Gammaproteobacteria</taxon>
        <taxon>Enterobacterales</taxon>
        <taxon>Enterobacteriaceae</taxon>
        <taxon>ant endosymbionts</taxon>
        <taxon>Candidatus Blochmanniella</taxon>
    </lineage>
</organism>
<protein>
    <recommendedName>
        <fullName evidence="1">ATP synthase subunit beta</fullName>
        <ecNumber evidence="1">7.1.2.2</ecNumber>
    </recommendedName>
    <alternativeName>
        <fullName evidence="1">ATP synthase F1 sector subunit beta</fullName>
    </alternativeName>
    <alternativeName>
        <fullName evidence="1">F-ATPase subunit beta</fullName>
    </alternativeName>
</protein>
<gene>
    <name evidence="1" type="primary">atpD</name>
    <name type="ordered locus">Bfl008</name>
</gene>
<name>ATPB_BLOFL</name>
<sequence length="464" mass="51071">MSIGKIIQVIGAVIDVEFQYNDIPNLYHALEVNIDNGNSHQVLILEVVQQLGRSIVRCIAMGSTNGLKRGLDVTNLKHGIQVPVGKETLGRVMDVLGNPIDMKGPINSIEKWSIHRSAPLYEELSSNQELLITGIKVIDLMCPFIKGGKIGLFGGAGVGKTVNIMELIRNIAIEHAGYSVFVGVGERIREGNDFYHEMIHSGILDKVALVYGQMNEPPGNRLRVALTGLTIAEKFRDEGHDVLLFIDNIYRYTLAGTEVSALLGRVPSAVGYQSTLSEEMGMLQERIASTKSGSITSVQAIYVPADDLTDPSPTTTFAHLDATIVLSRQIAALGIYPAVDPLDSYSKQLDPCIVGQEHYDIANNVKSILQRYQELKDIIAILGMDELSEEDKLIVLRSRKIQRFLSQPFFVAEVFTGFSGSYVSLEDTIAGFKEIIDGKYDHLPEQSFYMVGSVKEAIEKSKIL</sequence>